<reference key="1">
    <citation type="journal article" date="2007" name="Plant Cell">
        <title>Dothideomycete-plant interactions illuminated by genome sequencing and EST analysis of the wheat pathogen Stagonospora nodorum.</title>
        <authorList>
            <person name="Hane J.K."/>
            <person name="Lowe R.G.T."/>
            <person name="Solomon P.S."/>
            <person name="Tan K.-C."/>
            <person name="Schoch C.L."/>
            <person name="Spatafora J.W."/>
            <person name="Crous P.W."/>
            <person name="Kodira C.D."/>
            <person name="Birren B.W."/>
            <person name="Galagan J.E."/>
            <person name="Torriani S.F.F."/>
            <person name="McDonald B.A."/>
            <person name="Oliver R.P."/>
        </authorList>
    </citation>
    <scope>NUCLEOTIDE SEQUENCE [LARGE SCALE GENOMIC DNA]</scope>
    <source>
        <strain>SN15 / ATCC MYA-4574 / FGSC 10173</strain>
    </source>
</reference>
<gene>
    <name type="primary">KU70</name>
    <name type="ORF">SNOG_13012</name>
</gene>
<proteinExistence type="inferred from homology"/>
<feature type="chain" id="PRO_0000278346" description="ATP-dependent DNA helicase II subunit 1">
    <location>
        <begin position="1"/>
        <end position="652"/>
    </location>
</feature>
<feature type="domain" description="Ku">
    <location>
        <begin position="274"/>
        <end position="486"/>
    </location>
</feature>
<feature type="domain" description="SAP" evidence="2">
    <location>
        <begin position="613"/>
        <end position="647"/>
    </location>
</feature>
<feature type="region of interest" description="Disordered" evidence="3">
    <location>
        <begin position="1"/>
        <end position="22"/>
    </location>
</feature>
<feature type="region of interest" description="Disordered" evidence="3">
    <location>
        <begin position="38"/>
        <end position="59"/>
    </location>
</feature>
<feature type="region of interest" description="Disordered" evidence="3">
    <location>
        <begin position="565"/>
        <end position="612"/>
    </location>
</feature>
<feature type="compositionally biased region" description="Basic and acidic residues" evidence="3">
    <location>
        <begin position="1"/>
        <end position="10"/>
    </location>
</feature>
<feature type="compositionally biased region" description="Acidic residues" evidence="3">
    <location>
        <begin position="11"/>
        <end position="21"/>
    </location>
</feature>
<feature type="compositionally biased region" description="Basic and acidic residues" evidence="3">
    <location>
        <begin position="44"/>
        <end position="57"/>
    </location>
</feature>
<feature type="compositionally biased region" description="Polar residues" evidence="3">
    <location>
        <begin position="603"/>
        <end position="612"/>
    </location>
</feature>
<accession>Q0U5F2</accession>
<protein>
    <recommendedName>
        <fullName>ATP-dependent DNA helicase II subunit 1</fullName>
        <ecNumber>3.6.4.12</ecNumber>
    </recommendedName>
    <alternativeName>
        <fullName>ATP-dependent DNA helicase II subunit Ku70</fullName>
    </alternativeName>
</protein>
<name>KU70_PHANO</name>
<sequence>MADTQDNRPGEEEDDDEEIDESAYKTMKDAVLFAIDVSPSMLERPPKTEDKKADRDSPTSAALKCAYQLMQQRIISNPNDMMGILLFGTEKTDLKDGDSTFQHCYLLADLDVPSAQDVKRLRDLVEDEEEAEQILKPAKDGASIATVLFCANQIFTTKAPNFSSRRLFLVTDNDYPVNVKADKDTAVTRARDLYDLGCTIDLFPISQPDQTFDRSRFYDDLVYPTSPSDPDAPIAVATTTKVAKSGEGITLLKQLISSINSKATPRRALFSLPLELGPDLRIGVKGYILIKRQEHAKSCYVWVGGDKPQIVSSSTSHMADDTARVVEKTELRKAYKFGGDAITFTPDEIIKIRQAFGDPIIRIIGFKPISCLPIWTNTNKATFIYPSEADFIGSTRVFSALQQKLLKSKKMGLVWFIARRNAAPILSALIPAEEQTNEDGEQAMPPGLWLVPLPWADDIRQFPSPAADVLKTTDALTDKMRIIIEQLQLPKGVYDPAKYPNPDLQWFYRILQAMALEEELPEKPDDKTMPKFRQIDKRCGEYITEYGAEFEAAFAQLAVSTFPHRGKRASADPGDDKPAPKRVKKEPKVKEEGEDDEGLTDEQMATVNNKGQISKQTVAVLKAWLSQRGESTSGKKADLVERVQGYLEGKGL</sequence>
<evidence type="ECO:0000250" key="1"/>
<evidence type="ECO:0000255" key="2">
    <source>
        <dbReference type="PROSITE-ProRule" id="PRU00186"/>
    </source>
</evidence>
<evidence type="ECO:0000256" key="3">
    <source>
        <dbReference type="SAM" id="MobiDB-lite"/>
    </source>
</evidence>
<evidence type="ECO:0000305" key="4"/>
<organism>
    <name type="scientific">Phaeosphaeria nodorum (strain SN15 / ATCC MYA-4574 / FGSC 10173)</name>
    <name type="common">Glume blotch fungus</name>
    <name type="synonym">Parastagonospora nodorum</name>
    <dbReference type="NCBI Taxonomy" id="321614"/>
    <lineage>
        <taxon>Eukaryota</taxon>
        <taxon>Fungi</taxon>
        <taxon>Dikarya</taxon>
        <taxon>Ascomycota</taxon>
        <taxon>Pezizomycotina</taxon>
        <taxon>Dothideomycetes</taxon>
        <taxon>Pleosporomycetidae</taxon>
        <taxon>Pleosporales</taxon>
        <taxon>Pleosporineae</taxon>
        <taxon>Phaeosphaeriaceae</taxon>
        <taxon>Parastagonospora</taxon>
    </lineage>
</organism>
<comment type="function">
    <text evidence="1">Single-stranded DNA-dependent ATP-dependent helicase. Involved in non-homologous end joining (NHEJ) DNA double strand break repair. DNA-binding is sequence-independent but has a high affinity to nicks in double-stranded DNA and to the ends of duplex DNA. Binds to naturally occurring chromosomal ends, and therefore provides chromosomal end protection. Required also for telomere recombination to repair telomeric ends in the absence of telomerase. KU70, of the KU70/KU80 heterodimer, binds to the stem loop of TLC1, the RNA component of telomerase. Involved in telomere maintenance. Interacts with telomeric repeats and subtelomeric sequences thereby controlling telomere length and protecting against subtelomeric rearrangement. Maintains telomeric chromatin, which is involved in silencing the expression of genes located at the telomere. Required for mating-type switching (By similarity).</text>
</comment>
<comment type="catalytic activity">
    <reaction>
        <text>ATP + H2O = ADP + phosphate + H(+)</text>
        <dbReference type="Rhea" id="RHEA:13065"/>
        <dbReference type="ChEBI" id="CHEBI:15377"/>
        <dbReference type="ChEBI" id="CHEBI:15378"/>
        <dbReference type="ChEBI" id="CHEBI:30616"/>
        <dbReference type="ChEBI" id="CHEBI:43474"/>
        <dbReference type="ChEBI" id="CHEBI:456216"/>
        <dbReference type="EC" id="3.6.4.12"/>
    </reaction>
</comment>
<comment type="subunit">
    <text evidence="1">Heterodimer of Ku70 and Ku80.</text>
</comment>
<comment type="subcellular location">
    <subcellularLocation>
        <location evidence="1">Nucleus</location>
    </subcellularLocation>
    <subcellularLocation>
        <location evidence="1">Chromosome</location>
        <location evidence="1">Telomere</location>
    </subcellularLocation>
</comment>
<comment type="similarity">
    <text evidence="4">Belongs to the ku70 family.</text>
</comment>
<comment type="sequence caution" evidence="4">
    <conflict type="erroneous gene model prediction">
        <sequence resource="EMBL-CDS" id="EAT79812"/>
    </conflict>
</comment>
<dbReference type="EC" id="3.6.4.12"/>
<dbReference type="EMBL" id="CH445348">
    <property type="protein sequence ID" value="EAT79812.2"/>
    <property type="status" value="ALT_SEQ"/>
    <property type="molecule type" value="Genomic_DNA"/>
</dbReference>
<dbReference type="RefSeq" id="XP_001803226.1">
    <property type="nucleotide sequence ID" value="XM_001803174.1"/>
</dbReference>
<dbReference type="SMR" id="Q0U5F2"/>
<dbReference type="FunCoup" id="Q0U5F2">
    <property type="interactions" value="636"/>
</dbReference>
<dbReference type="STRING" id="321614.Q0U5F2"/>
<dbReference type="GeneID" id="5980138"/>
<dbReference type="KEGG" id="pno:SNOG_13012"/>
<dbReference type="VEuPathDB" id="FungiDB:JI435_130120"/>
<dbReference type="eggNOG" id="KOG2327">
    <property type="taxonomic scope" value="Eukaryota"/>
</dbReference>
<dbReference type="InParanoid" id="Q0U5F2"/>
<dbReference type="OMA" id="FWANVKH"/>
<dbReference type="OrthoDB" id="3249161at2759"/>
<dbReference type="Proteomes" id="UP000001055">
    <property type="component" value="Unassembled WGS sequence"/>
</dbReference>
<dbReference type="GO" id="GO:0000781">
    <property type="term" value="C:chromosome, telomeric region"/>
    <property type="evidence" value="ECO:0007669"/>
    <property type="project" value="UniProtKB-SubCell"/>
</dbReference>
<dbReference type="GO" id="GO:0043564">
    <property type="term" value="C:Ku70:Ku80 complex"/>
    <property type="evidence" value="ECO:0000318"/>
    <property type="project" value="GO_Central"/>
</dbReference>
<dbReference type="GO" id="GO:0005524">
    <property type="term" value="F:ATP binding"/>
    <property type="evidence" value="ECO:0007669"/>
    <property type="project" value="UniProtKB-KW"/>
</dbReference>
<dbReference type="GO" id="GO:0016887">
    <property type="term" value="F:ATP hydrolysis activity"/>
    <property type="evidence" value="ECO:0007669"/>
    <property type="project" value="RHEA"/>
</dbReference>
<dbReference type="GO" id="GO:0003684">
    <property type="term" value="F:damaged DNA binding"/>
    <property type="evidence" value="ECO:0007669"/>
    <property type="project" value="InterPro"/>
</dbReference>
<dbReference type="GO" id="GO:0003678">
    <property type="term" value="F:DNA helicase activity"/>
    <property type="evidence" value="ECO:0007669"/>
    <property type="project" value="InterPro"/>
</dbReference>
<dbReference type="GO" id="GO:0042162">
    <property type="term" value="F:telomeric DNA binding"/>
    <property type="evidence" value="ECO:0000318"/>
    <property type="project" value="GO_Central"/>
</dbReference>
<dbReference type="GO" id="GO:0006310">
    <property type="term" value="P:DNA recombination"/>
    <property type="evidence" value="ECO:0007669"/>
    <property type="project" value="UniProtKB-KW"/>
</dbReference>
<dbReference type="GO" id="GO:0006303">
    <property type="term" value="P:double-strand break repair via nonhomologous end joining"/>
    <property type="evidence" value="ECO:0000318"/>
    <property type="project" value="GO_Central"/>
</dbReference>
<dbReference type="GO" id="GO:0000723">
    <property type="term" value="P:telomere maintenance"/>
    <property type="evidence" value="ECO:0000318"/>
    <property type="project" value="GO_Central"/>
</dbReference>
<dbReference type="CDD" id="cd00788">
    <property type="entry name" value="KU70"/>
    <property type="match status" value="1"/>
</dbReference>
<dbReference type="CDD" id="cd01458">
    <property type="entry name" value="vWA_ku"/>
    <property type="match status" value="1"/>
</dbReference>
<dbReference type="FunFam" id="1.10.1600.10:FF:000004">
    <property type="entry name" value="ATP-dependent DNA helicase II subunit 1"/>
    <property type="match status" value="1"/>
</dbReference>
<dbReference type="FunFam" id="3.40.50.410:FF:000071">
    <property type="entry name" value="ATP-dependent DNA helicase II subunit 1"/>
    <property type="match status" value="1"/>
</dbReference>
<dbReference type="FunFam" id="4.10.970.10:FF:000003">
    <property type="entry name" value="ATP-dependent DNA helicase II subunit 1"/>
    <property type="match status" value="1"/>
</dbReference>
<dbReference type="FunFam" id="2.40.290.10:FF:000001">
    <property type="entry name" value="X-ray repair cross complementing 6"/>
    <property type="match status" value="1"/>
</dbReference>
<dbReference type="Gene3D" id="1.10.1600.10">
    <property type="match status" value="1"/>
</dbReference>
<dbReference type="Gene3D" id="2.40.290.10">
    <property type="match status" value="1"/>
</dbReference>
<dbReference type="Gene3D" id="4.10.970.10">
    <property type="entry name" value="Ku70, bridge and pillars"/>
    <property type="match status" value="1"/>
</dbReference>
<dbReference type="Gene3D" id="1.10.720.30">
    <property type="entry name" value="SAP domain"/>
    <property type="match status" value="1"/>
</dbReference>
<dbReference type="Gene3D" id="3.40.50.410">
    <property type="entry name" value="von Willebrand factor, type A domain"/>
    <property type="match status" value="1"/>
</dbReference>
<dbReference type="InterPro" id="IPR006165">
    <property type="entry name" value="Ku70"/>
</dbReference>
<dbReference type="InterPro" id="IPR006164">
    <property type="entry name" value="Ku70/Ku80_beta-barrel_dom"/>
</dbReference>
<dbReference type="InterPro" id="IPR027388">
    <property type="entry name" value="Ku70_bridge/pillars_dom_sf"/>
</dbReference>
<dbReference type="InterPro" id="IPR047087">
    <property type="entry name" value="KU70_core_dom"/>
</dbReference>
<dbReference type="InterPro" id="IPR005160">
    <property type="entry name" value="Ku_C"/>
</dbReference>
<dbReference type="InterPro" id="IPR005161">
    <property type="entry name" value="Ku_N"/>
</dbReference>
<dbReference type="InterPro" id="IPR003034">
    <property type="entry name" value="SAP_dom"/>
</dbReference>
<dbReference type="InterPro" id="IPR036361">
    <property type="entry name" value="SAP_dom_sf"/>
</dbReference>
<dbReference type="InterPro" id="IPR016194">
    <property type="entry name" value="SPOC-like_C_dom_sf"/>
</dbReference>
<dbReference type="InterPro" id="IPR036465">
    <property type="entry name" value="vWFA_dom_sf"/>
</dbReference>
<dbReference type="NCBIfam" id="TIGR00578">
    <property type="entry name" value="ku70"/>
    <property type="match status" value="1"/>
</dbReference>
<dbReference type="PANTHER" id="PTHR12604">
    <property type="entry name" value="KU AUTOANTIGEN DNA HELICASE"/>
    <property type="match status" value="1"/>
</dbReference>
<dbReference type="PANTHER" id="PTHR12604:SF2">
    <property type="entry name" value="X-RAY REPAIR CROSS-COMPLEMENTING PROTEIN 6"/>
    <property type="match status" value="1"/>
</dbReference>
<dbReference type="Pfam" id="PF02735">
    <property type="entry name" value="Ku"/>
    <property type="match status" value="1"/>
</dbReference>
<dbReference type="Pfam" id="PF03730">
    <property type="entry name" value="Ku_C"/>
    <property type="match status" value="1"/>
</dbReference>
<dbReference type="Pfam" id="PF03731">
    <property type="entry name" value="Ku_N"/>
    <property type="match status" value="1"/>
</dbReference>
<dbReference type="Pfam" id="PF02037">
    <property type="entry name" value="SAP"/>
    <property type="match status" value="1"/>
</dbReference>
<dbReference type="PIRSF" id="PIRSF003033">
    <property type="entry name" value="Ku70"/>
    <property type="match status" value="1"/>
</dbReference>
<dbReference type="SMART" id="SM00559">
    <property type="entry name" value="Ku78"/>
    <property type="match status" value="1"/>
</dbReference>
<dbReference type="SMART" id="SM00513">
    <property type="entry name" value="SAP"/>
    <property type="match status" value="1"/>
</dbReference>
<dbReference type="SUPFAM" id="SSF68906">
    <property type="entry name" value="SAP domain"/>
    <property type="match status" value="1"/>
</dbReference>
<dbReference type="SUPFAM" id="SSF100939">
    <property type="entry name" value="SPOC domain-like"/>
    <property type="match status" value="1"/>
</dbReference>
<dbReference type="SUPFAM" id="SSF53300">
    <property type="entry name" value="vWA-like"/>
    <property type="match status" value="1"/>
</dbReference>
<dbReference type="PROSITE" id="PS50800">
    <property type="entry name" value="SAP"/>
    <property type="match status" value="1"/>
</dbReference>
<keyword id="KW-0067">ATP-binding</keyword>
<keyword id="KW-0158">Chromosome</keyword>
<keyword id="KW-0227">DNA damage</keyword>
<keyword id="KW-0233">DNA recombination</keyword>
<keyword id="KW-0234">DNA repair</keyword>
<keyword id="KW-0238">DNA-binding</keyword>
<keyword id="KW-0347">Helicase</keyword>
<keyword id="KW-0378">Hydrolase</keyword>
<keyword id="KW-0547">Nucleotide-binding</keyword>
<keyword id="KW-0539">Nucleus</keyword>
<keyword id="KW-0779">Telomere</keyword>